<reference key="1">
    <citation type="journal article" date="2009" name="PLoS Biol.">
        <title>Lineage-specific biology revealed by a finished genome assembly of the mouse.</title>
        <authorList>
            <person name="Church D.M."/>
            <person name="Goodstadt L."/>
            <person name="Hillier L.W."/>
            <person name="Zody M.C."/>
            <person name="Goldstein S."/>
            <person name="She X."/>
            <person name="Bult C.J."/>
            <person name="Agarwala R."/>
            <person name="Cherry J.L."/>
            <person name="DiCuccio M."/>
            <person name="Hlavina W."/>
            <person name="Kapustin Y."/>
            <person name="Meric P."/>
            <person name="Maglott D."/>
            <person name="Birtle Z."/>
            <person name="Marques A.C."/>
            <person name="Graves T."/>
            <person name="Zhou S."/>
            <person name="Teague B."/>
            <person name="Potamousis K."/>
            <person name="Churas C."/>
            <person name="Place M."/>
            <person name="Herschleb J."/>
            <person name="Runnheim R."/>
            <person name="Forrest D."/>
            <person name="Amos-Landgraf J."/>
            <person name="Schwartz D.C."/>
            <person name="Cheng Z."/>
            <person name="Lindblad-Toh K."/>
            <person name="Eichler E.E."/>
            <person name="Ponting C.P."/>
        </authorList>
    </citation>
    <scope>NUCLEOTIDE SEQUENCE [LARGE SCALE GENOMIC DNA]</scope>
    <source>
        <strain>C57BL/6J</strain>
    </source>
</reference>
<reference key="2">
    <citation type="journal article" date="2004" name="Genome Res.">
        <title>The status, quality, and expansion of the NIH full-length cDNA project: the Mammalian Gene Collection (MGC).</title>
        <authorList>
            <consortium name="The MGC Project Team"/>
        </authorList>
    </citation>
    <scope>NUCLEOTIDE SEQUENCE [LARGE SCALE MRNA] OF 462-815</scope>
    <source>
        <strain>C57BL/6J</strain>
        <tissue>Brain</tissue>
    </source>
</reference>
<reference key="3">
    <citation type="journal article" date="2010" name="Cell">
        <title>A tissue-specific atlas of mouse protein phosphorylation and expression.</title>
        <authorList>
            <person name="Huttlin E.L."/>
            <person name="Jedrychowski M.P."/>
            <person name="Elias J.E."/>
            <person name="Goswami T."/>
            <person name="Rad R."/>
            <person name="Beausoleil S.A."/>
            <person name="Villen J."/>
            <person name="Haas W."/>
            <person name="Sowa M.E."/>
            <person name="Gygi S.P."/>
        </authorList>
    </citation>
    <scope>IDENTIFICATION BY MASS SPECTROMETRY [LARGE SCALE ANALYSIS]</scope>
    <source>
        <tissue>Kidney</tissue>
    </source>
</reference>
<reference key="4">
    <citation type="journal article" date="2013" name="Nat. Genet.">
        <title>ANKS6 is a central component of a nephronophthisis module linking NEK8 to INVS and NPHP3.</title>
        <authorList>
            <person name="Hoff S."/>
            <person name="Halbritter J."/>
            <person name="Epting D."/>
            <person name="Frank V."/>
            <person name="Nguyen T.M."/>
            <person name="van Reeuwijk J."/>
            <person name="Boehlke C."/>
            <person name="Schell C."/>
            <person name="Yasunaga T."/>
            <person name="Helmstadter M."/>
            <person name="Mergen M."/>
            <person name="Filhol E."/>
            <person name="Boldt K."/>
            <person name="Horn N."/>
            <person name="Ueffing M."/>
            <person name="Otto E.A."/>
            <person name="Eisenberger T."/>
            <person name="Elting M.W."/>
            <person name="van Wijk J.A."/>
            <person name="Bockenhauer D."/>
            <person name="Sebire N.J."/>
            <person name="Rittig S."/>
            <person name="Vyberg M."/>
            <person name="Ring T."/>
            <person name="Pohl M."/>
            <person name="Pape L."/>
            <person name="Neuhaus T.J."/>
            <person name="Elshakhs N.A."/>
            <person name="Koon S.J."/>
            <person name="Harris P.C."/>
            <person name="Grahammer F."/>
            <person name="Huber T.B."/>
            <person name="Kuehn E.W."/>
            <person name="Kramer-Zucker A."/>
            <person name="Bolz H.J."/>
            <person name="Roepman R."/>
            <person name="Saunier S."/>
            <person name="Walz G."/>
            <person name="Hildebrandt F."/>
            <person name="Bergmann C."/>
            <person name="Lienkamp S.S."/>
        </authorList>
    </citation>
    <scope>SUBCELLULAR LOCATION</scope>
    <scope>TISSUE SPECIFICITY</scope>
</reference>
<reference key="5">
    <citation type="journal article" date="2015" name="Kidney Int.">
        <title>Anks3 interacts with nephronophthisis proteins and is required for normal renal development.</title>
        <authorList>
            <person name="Yakulov T.A."/>
            <person name="Yasunaga T."/>
            <person name="Ramachandran H."/>
            <person name="Engel C."/>
            <person name="Mueller B."/>
            <person name="Hoff S."/>
            <person name="Dengjel J."/>
            <person name="Lienkamp S.S."/>
            <person name="Walz G."/>
        </authorList>
    </citation>
    <scope>INTERACTION WITH ANKS3</scope>
</reference>
<reference key="6">
    <citation type="journal article" date="2015" name="PLoS ONE">
        <title>ANKS3 Co-Localises with ANKS6 in Mouse Renal Cilia and Is Associated with Vasopressin Signaling and Apoptosis In Vivo in Mice.</title>
        <authorList>
            <person name="Delestre L."/>
            <person name="Bakey Z."/>
            <person name="Prado C."/>
            <person name="Hoffmann S."/>
            <person name="Bihoreau M.T."/>
            <person name="Lelongt B."/>
            <person name="Gauguier D."/>
        </authorList>
    </citation>
    <scope>INTERACTION WITH ANKS3</scope>
    <scope>TISSUE SPECIFICITY</scope>
</reference>
<protein>
    <recommendedName>
        <fullName>Ankyrin repeat and SAM domain-containing protein 6</fullName>
    </recommendedName>
    <alternativeName>
        <fullName>SamCystin</fullName>
    </alternativeName>
    <alternativeName>
        <fullName>Sterile alpha motif domain-containing protein 6</fullName>
        <shortName>SAM domain-containing protein 6</shortName>
    </alternativeName>
</protein>
<keyword id="KW-0040">ANK repeat</keyword>
<keyword id="KW-0966">Cell projection</keyword>
<keyword id="KW-0969">Cilium</keyword>
<keyword id="KW-0963">Cytoplasm</keyword>
<keyword id="KW-0379">Hydroxylation</keyword>
<keyword id="KW-0597">Phosphoprotein</keyword>
<keyword id="KW-1185">Reference proteome</keyword>
<keyword id="KW-0677">Repeat</keyword>
<comment type="function">
    <text evidence="2">Required for renal function.</text>
</comment>
<comment type="subunit">
    <text evidence="1 2 6 7">Homooligomer (By similarity). Interacts with NEK8 (By similarity). Central component of a complex containing at least ANKS6, INVS, NEK8 and NPHP3 (By similarity). ANKS6 may organize complex assembly by linking INVS and NPHP3 to NEK8 and INVS may target the complex to the proximal ciliary axoneme (By similarity). Interacts (via SAM domain) with BICC1 (via KH domains) in an RNA-dependent manner (By similarity). Interacts (via SAM domain) with ANKS3 (via SAM domain) (PubMed:25671767, PubMed:26327442).</text>
</comment>
<comment type="subcellular location">
    <subcellularLocation>
        <location evidence="5">Cell projection</location>
        <location evidence="5">Cilium</location>
    </subcellularLocation>
    <subcellularLocation>
        <location evidence="1">Cytoplasm</location>
    </subcellularLocation>
    <text evidence="5">Localizes to the proximal region of the primary cilium in the presence of INVS.</text>
</comment>
<comment type="tissue specificity">
    <text evidence="5 7">Expressed in kidney (at protein level).</text>
</comment>
<comment type="domain">
    <text evidence="1">The ankyrin repeats are necessary and sufficient for NEK8-binding.</text>
</comment>
<comment type="PTM">
    <text evidence="1">Hydroxylated at Asn-129, most probably by HIF1AN. This hydroxylation results in decreased NEK8-binding.</text>
</comment>
<comment type="sequence caution" evidence="8">
    <conflict type="erroneous initiation">
        <sequence resource="EMBL-CDS" id="AAH72562"/>
    </conflict>
    <text>Truncated N-terminus.</text>
</comment>
<dbReference type="EMBL" id="AL831741">
    <property type="status" value="NOT_ANNOTATED_CDS"/>
    <property type="molecule type" value="Genomic_DNA"/>
</dbReference>
<dbReference type="EMBL" id="BC072562">
    <property type="protein sequence ID" value="AAH72562.1"/>
    <property type="status" value="ALT_INIT"/>
    <property type="molecule type" value="mRNA"/>
</dbReference>
<dbReference type="CCDS" id="CCDS89741.1"/>
<dbReference type="RefSeq" id="NP_001343355.1">
    <property type="nucleotide sequence ID" value="NM_001356426.1"/>
</dbReference>
<dbReference type="RefSeq" id="XP_006538395.1">
    <property type="nucleotide sequence ID" value="XM_006538332.2"/>
</dbReference>
<dbReference type="SMR" id="Q6GQX6"/>
<dbReference type="BioGRID" id="217674">
    <property type="interactions" value="1"/>
</dbReference>
<dbReference type="CORUM" id="Q6GQX6"/>
<dbReference type="FunCoup" id="Q6GQX6">
    <property type="interactions" value="176"/>
</dbReference>
<dbReference type="IntAct" id="Q6GQX6">
    <property type="interactions" value="1"/>
</dbReference>
<dbReference type="STRING" id="10090.ENSMUSP00000081665"/>
<dbReference type="GlyGen" id="Q6GQX6">
    <property type="glycosylation" value="1 site, 1 N-linked glycan (1 site)"/>
</dbReference>
<dbReference type="iPTMnet" id="Q6GQX6"/>
<dbReference type="PhosphoSitePlus" id="Q6GQX6"/>
<dbReference type="PaxDb" id="10090-ENSMUSP00000103376"/>
<dbReference type="ProteomicsDB" id="281987"/>
<dbReference type="Pumba" id="Q6GQX6"/>
<dbReference type="Antibodypedia" id="1903">
    <property type="antibodies" value="114 antibodies from 16 providers"/>
</dbReference>
<dbReference type="Ensembl" id="ENSMUST00000229609.2">
    <property type="protein sequence ID" value="ENSMUSP00000155271.2"/>
    <property type="gene ID" value="ENSMUSG00000066191.13"/>
</dbReference>
<dbReference type="GeneID" id="75691"/>
<dbReference type="AGR" id="MGI:1922941"/>
<dbReference type="MGI" id="MGI:1922941">
    <property type="gene designation" value="Anks6"/>
</dbReference>
<dbReference type="VEuPathDB" id="HostDB:ENSMUSG00000066191"/>
<dbReference type="eggNOG" id="KOG4369">
    <property type="taxonomic scope" value="Eukaryota"/>
</dbReference>
<dbReference type="GeneTree" id="ENSGT00940000157664"/>
<dbReference type="InParanoid" id="Q6GQX6"/>
<dbReference type="OrthoDB" id="539213at2759"/>
<dbReference type="PhylomeDB" id="Q6GQX6"/>
<dbReference type="BioGRID-ORCS" id="75691">
    <property type="hits" value="0 hits in 79 CRISPR screens"/>
</dbReference>
<dbReference type="PRO" id="PR:Q6GQX6"/>
<dbReference type="Proteomes" id="UP000000589">
    <property type="component" value="Chromosome 4"/>
</dbReference>
<dbReference type="RNAct" id="Q6GQX6">
    <property type="molecule type" value="protein"/>
</dbReference>
<dbReference type="Bgee" id="ENSMUSG00000066191">
    <property type="expression patterns" value="Expressed in proximal tubule and 59 other cell types or tissues"/>
</dbReference>
<dbReference type="ExpressionAtlas" id="Q6GQX6">
    <property type="expression patterns" value="baseline and differential"/>
</dbReference>
<dbReference type="GO" id="GO:0097543">
    <property type="term" value="C:ciliary inversin compartment"/>
    <property type="evidence" value="ECO:0000314"/>
    <property type="project" value="MGI"/>
</dbReference>
<dbReference type="GO" id="GO:0005737">
    <property type="term" value="C:cytoplasm"/>
    <property type="evidence" value="ECO:0007669"/>
    <property type="project" value="UniProtKB-SubCell"/>
</dbReference>
<dbReference type="GO" id="GO:0007368">
    <property type="term" value="P:determination of left/right symmetry"/>
    <property type="evidence" value="ECO:0000315"/>
    <property type="project" value="MGI"/>
</dbReference>
<dbReference type="GO" id="GO:0007507">
    <property type="term" value="P:heart development"/>
    <property type="evidence" value="ECO:0000315"/>
    <property type="project" value="MGI"/>
</dbReference>
<dbReference type="GO" id="GO:0001701">
    <property type="term" value="P:in utero embryonic development"/>
    <property type="evidence" value="ECO:0000315"/>
    <property type="project" value="MGI"/>
</dbReference>
<dbReference type="GO" id="GO:0001822">
    <property type="term" value="P:kidney development"/>
    <property type="evidence" value="ECO:0000315"/>
    <property type="project" value="MGI"/>
</dbReference>
<dbReference type="CDD" id="cd09518">
    <property type="entry name" value="SAM_ANKS6"/>
    <property type="match status" value="1"/>
</dbReference>
<dbReference type="FunFam" id="1.25.40.20:FF:000576">
    <property type="entry name" value="ankyrin repeat and SAM domain-containing protein 6 isoform X3"/>
    <property type="match status" value="1"/>
</dbReference>
<dbReference type="FunFam" id="1.25.40.20:FF:000178">
    <property type="entry name" value="Ankyrin repeat and sterile alpha motif domain containing 6"/>
    <property type="match status" value="1"/>
</dbReference>
<dbReference type="FunFam" id="1.10.150.50:FF:000025">
    <property type="entry name" value="Ankyrin repeat and sterile alpha motif domain-containing 6"/>
    <property type="match status" value="1"/>
</dbReference>
<dbReference type="Gene3D" id="1.25.40.20">
    <property type="entry name" value="Ankyrin repeat-containing domain"/>
    <property type="match status" value="3"/>
</dbReference>
<dbReference type="Gene3D" id="1.10.150.50">
    <property type="entry name" value="Transcription Factor, Ets-1"/>
    <property type="match status" value="1"/>
</dbReference>
<dbReference type="InterPro" id="IPR051631">
    <property type="entry name" value="Ankyrin-KH/SAM_domain"/>
</dbReference>
<dbReference type="InterPro" id="IPR002110">
    <property type="entry name" value="Ankyrin_rpt"/>
</dbReference>
<dbReference type="InterPro" id="IPR036770">
    <property type="entry name" value="Ankyrin_rpt-contain_sf"/>
</dbReference>
<dbReference type="InterPro" id="IPR001660">
    <property type="entry name" value="SAM"/>
</dbReference>
<dbReference type="InterPro" id="IPR013761">
    <property type="entry name" value="SAM/pointed_sf"/>
</dbReference>
<dbReference type="PANTHER" id="PTHR23206">
    <property type="entry name" value="MASK PROTEIN"/>
    <property type="match status" value="1"/>
</dbReference>
<dbReference type="PANTHER" id="PTHR23206:SF7">
    <property type="entry name" value="PROTEIN KINASE DOMAIN-CONTAINING PROTEIN"/>
    <property type="match status" value="1"/>
</dbReference>
<dbReference type="Pfam" id="PF00023">
    <property type="entry name" value="Ank"/>
    <property type="match status" value="3"/>
</dbReference>
<dbReference type="Pfam" id="PF12796">
    <property type="entry name" value="Ank_2"/>
    <property type="match status" value="2"/>
</dbReference>
<dbReference type="Pfam" id="PF00536">
    <property type="entry name" value="SAM_1"/>
    <property type="match status" value="1"/>
</dbReference>
<dbReference type="PRINTS" id="PR01415">
    <property type="entry name" value="ANKYRIN"/>
</dbReference>
<dbReference type="SMART" id="SM00248">
    <property type="entry name" value="ANK"/>
    <property type="match status" value="10"/>
</dbReference>
<dbReference type="SMART" id="SM00454">
    <property type="entry name" value="SAM"/>
    <property type="match status" value="1"/>
</dbReference>
<dbReference type="SUPFAM" id="SSF48403">
    <property type="entry name" value="Ankyrin repeat"/>
    <property type="match status" value="2"/>
</dbReference>
<dbReference type="SUPFAM" id="SSF47769">
    <property type="entry name" value="SAM/Pointed domain"/>
    <property type="match status" value="1"/>
</dbReference>
<dbReference type="PROSITE" id="PS50297">
    <property type="entry name" value="ANK_REP_REGION"/>
    <property type="match status" value="1"/>
</dbReference>
<dbReference type="PROSITE" id="PS50088">
    <property type="entry name" value="ANK_REPEAT"/>
    <property type="match status" value="7"/>
</dbReference>
<dbReference type="PROSITE" id="PS50105">
    <property type="entry name" value="SAM_DOMAIN"/>
    <property type="match status" value="1"/>
</dbReference>
<proteinExistence type="evidence at protein level"/>
<name>ANKS6_MOUSE</name>
<sequence length="883" mass="93474">MGEGALAPGLQLLLRACEQGDTDTARRLLEPGADPVAGPEAGAEPAGPEAVRAAEAGAPVPVDCSDEAGNSALQLAAAGGHEPLVRFLLRRGASVNSRNHYGWSALMQAARCGHVSVAHLLLDHGADVNAQNRLGASVLTVASRGGHLGVVKLLLEAGAIVDHHTPSGESPATGGSGDELLGITALMAAVQHGHEAVVRLLMEWGADPNHTARTVGWSPLMLAALLGKLNVAQQLVEKGANPDHLSVLEKTAFEVALDRKYRDLAEYLDPLTTVRPKTDEEKRRPDIFYALKMGNFQLVKEIADEDPNHVNLVNGDGATPLMLAAVTGHLPLVQLLVEKHADMDKQDSVHGWTALMQATYHGNKEIVKYLLNQGADVALRAKNGYTAFDLVMLLNDPDTELVRLLASVCMQVNKDRGRPSHRPPLPHSKARQPWSIPVLPDDKGGLKSWWSRMSNRFRKLKLMQTLPRGLAANQPLPFSDEPELALDSTMRAPPQDRTSHLGPPEAAHATKDSGPGNPRREKGDVLLTTMLRNGAPFPRLPSDKLKAVIPPFLPPSSFELWSSDRSHTCHNGKADPTKTALPPRASRAHPVGCVGTDGATSRPVKFPSISRSPASPASSGSFNHSPHSSGGASGIGGMSRLGGELHSRSGGSVDSVLSQIAAQRKKAAGLCEQKPRQQSSPVGPATSSSPPELPASLPSSGSGSSSGPSSSKKLDPSKRPPSGTSATSKSTSPTLTPSPSPKGHTAESSVSSSSSHRQSKSSGGSSSGTITDEDELTGILKKLSLEKYQPIFEEQEVDMEAFLTLTDGDLQELGIKTDGSRQQILAAISELNAGKGRERQILQETIHNFHSSFESSASNTRAPGNGPSMAGWTRPEETVSSRR</sequence>
<accession>Q6GQX6</accession>
<feature type="chain" id="PRO_0000067066" description="Ankyrin repeat and SAM domain-containing protein 6">
    <location>
        <begin position="1"/>
        <end position="883"/>
    </location>
</feature>
<feature type="repeat" description="ANK 1">
    <location>
        <begin position="8"/>
        <end position="37"/>
    </location>
</feature>
<feature type="repeat" description="ANK 2">
    <location>
        <begin position="68"/>
        <end position="97"/>
    </location>
</feature>
<feature type="repeat" description="ANK 3">
    <location>
        <begin position="101"/>
        <end position="130"/>
    </location>
</feature>
<feature type="repeat" description="ANK 4">
    <location>
        <begin position="134"/>
        <end position="163"/>
    </location>
</feature>
<feature type="repeat" description="ANK 5">
    <location>
        <begin position="181"/>
        <end position="210"/>
    </location>
</feature>
<feature type="repeat" description="ANK 6">
    <location>
        <begin position="215"/>
        <end position="244"/>
    </location>
</feature>
<feature type="repeat" description="ANK 7">
    <location>
        <begin position="282"/>
        <end position="312"/>
    </location>
</feature>
<feature type="repeat" description="ANK 8">
    <location>
        <begin position="316"/>
        <end position="345"/>
    </location>
</feature>
<feature type="repeat" description="ANK 9">
    <location>
        <begin position="350"/>
        <end position="379"/>
    </location>
</feature>
<feature type="repeat" description="ANK 10">
    <location>
        <begin position="383"/>
        <end position="414"/>
    </location>
</feature>
<feature type="domain" description="SAM" evidence="3">
    <location>
        <begin position="771"/>
        <end position="834"/>
    </location>
</feature>
<feature type="region of interest" description="Disordered" evidence="4">
    <location>
        <begin position="30"/>
        <end position="50"/>
    </location>
</feature>
<feature type="region of interest" description="Disordered" evidence="4">
    <location>
        <begin position="414"/>
        <end position="439"/>
    </location>
</feature>
<feature type="region of interest" description="Disordered" evidence="4">
    <location>
        <begin position="490"/>
        <end position="522"/>
    </location>
</feature>
<feature type="region of interest" description="Disordered" evidence="4">
    <location>
        <begin position="566"/>
        <end position="773"/>
    </location>
</feature>
<feature type="region of interest" description="Disordered" evidence="4">
    <location>
        <begin position="852"/>
        <end position="883"/>
    </location>
</feature>
<feature type="compositionally biased region" description="Basic and acidic residues" evidence="4">
    <location>
        <begin position="566"/>
        <end position="576"/>
    </location>
</feature>
<feature type="compositionally biased region" description="Low complexity" evidence="4">
    <location>
        <begin position="607"/>
        <end position="630"/>
    </location>
</feature>
<feature type="compositionally biased region" description="Gly residues" evidence="4">
    <location>
        <begin position="631"/>
        <end position="640"/>
    </location>
</feature>
<feature type="compositionally biased region" description="Polar residues" evidence="4">
    <location>
        <begin position="649"/>
        <end position="661"/>
    </location>
</feature>
<feature type="compositionally biased region" description="Low complexity" evidence="4">
    <location>
        <begin position="687"/>
        <end position="711"/>
    </location>
</feature>
<feature type="compositionally biased region" description="Low complexity" evidence="4">
    <location>
        <begin position="720"/>
        <end position="737"/>
    </location>
</feature>
<feature type="compositionally biased region" description="Low complexity" evidence="4">
    <location>
        <begin position="748"/>
        <end position="768"/>
    </location>
</feature>
<feature type="compositionally biased region" description="Polar residues" evidence="4">
    <location>
        <begin position="852"/>
        <end position="862"/>
    </location>
</feature>
<feature type="compositionally biased region" description="Basic and acidic residues" evidence="4">
    <location>
        <begin position="874"/>
        <end position="883"/>
    </location>
</feature>
<feature type="site" description="Essential for ANKS3 interaction" evidence="1">
    <location>
        <position position="821"/>
    </location>
</feature>
<feature type="modified residue" description="Phosphoserine" evidence="2">
    <location>
        <position position="649"/>
    </location>
</feature>
<feature type="modified residue" description="Phosphoserine" evidence="2">
    <location>
        <position position="732"/>
    </location>
</feature>
<feature type="modified residue" description="Phosphoserine" evidence="2">
    <location>
        <position position="740"/>
    </location>
</feature>
<evidence type="ECO:0000250" key="1">
    <source>
        <dbReference type="UniProtKB" id="P0C0T2"/>
    </source>
</evidence>
<evidence type="ECO:0000250" key="2">
    <source>
        <dbReference type="UniProtKB" id="Q68DC2"/>
    </source>
</evidence>
<evidence type="ECO:0000255" key="3">
    <source>
        <dbReference type="PROSITE-ProRule" id="PRU00184"/>
    </source>
</evidence>
<evidence type="ECO:0000256" key="4">
    <source>
        <dbReference type="SAM" id="MobiDB-lite"/>
    </source>
</evidence>
<evidence type="ECO:0000269" key="5">
    <source>
    </source>
</evidence>
<evidence type="ECO:0000269" key="6">
    <source>
    </source>
</evidence>
<evidence type="ECO:0000269" key="7">
    <source>
    </source>
</evidence>
<evidence type="ECO:0000305" key="8"/>
<gene>
    <name type="primary">Anks6</name>
    <name type="synonym">Gm635</name>
    <name type="synonym">Samd6</name>
</gene>
<organism>
    <name type="scientific">Mus musculus</name>
    <name type="common">Mouse</name>
    <dbReference type="NCBI Taxonomy" id="10090"/>
    <lineage>
        <taxon>Eukaryota</taxon>
        <taxon>Metazoa</taxon>
        <taxon>Chordata</taxon>
        <taxon>Craniata</taxon>
        <taxon>Vertebrata</taxon>
        <taxon>Euteleostomi</taxon>
        <taxon>Mammalia</taxon>
        <taxon>Eutheria</taxon>
        <taxon>Euarchontoglires</taxon>
        <taxon>Glires</taxon>
        <taxon>Rodentia</taxon>
        <taxon>Myomorpha</taxon>
        <taxon>Muroidea</taxon>
        <taxon>Muridae</taxon>
        <taxon>Murinae</taxon>
        <taxon>Mus</taxon>
        <taxon>Mus</taxon>
    </lineage>
</organism>